<feature type="chain" id="PRO_0000209493" description="Fe/S biogenesis protein NfuA">
    <location>
        <begin position="1"/>
        <end position="199"/>
    </location>
</feature>
<feature type="binding site" evidence="1">
    <location>
        <position position="151"/>
    </location>
    <ligand>
        <name>[4Fe-4S] cluster</name>
        <dbReference type="ChEBI" id="CHEBI:49883"/>
    </ligand>
</feature>
<feature type="binding site" evidence="1">
    <location>
        <position position="154"/>
    </location>
    <ligand>
        <name>[4Fe-4S] cluster</name>
        <dbReference type="ChEBI" id="CHEBI:49883"/>
    </ligand>
</feature>
<reference key="1">
    <citation type="journal article" date="2003" name="J. Bacteriol.">
        <title>Comparative analyses of the complete genome sequences of Pierce's disease and citrus variegated chlorosis strains of Xylella fastidiosa.</title>
        <authorList>
            <person name="Van Sluys M.A."/>
            <person name="de Oliveira M.C."/>
            <person name="Monteiro-Vitorello C.B."/>
            <person name="Miyaki C.Y."/>
            <person name="Furlan L.R."/>
            <person name="Camargo L.E.A."/>
            <person name="da Silva A.C.R."/>
            <person name="Moon D.H."/>
            <person name="Takita M.A."/>
            <person name="Lemos E.G.M."/>
            <person name="Machado M.A."/>
            <person name="Ferro M.I.T."/>
            <person name="da Silva F.R."/>
            <person name="Goldman M.H.S."/>
            <person name="Goldman G.H."/>
            <person name="Lemos M.V.F."/>
            <person name="El-Dorry H."/>
            <person name="Tsai S.M."/>
            <person name="Carrer H."/>
            <person name="Carraro D.M."/>
            <person name="de Oliveira R.C."/>
            <person name="Nunes L.R."/>
            <person name="Siqueira W.J."/>
            <person name="Coutinho L.L."/>
            <person name="Kimura E.T."/>
            <person name="Ferro E.S."/>
            <person name="Harakava R."/>
            <person name="Kuramae E.E."/>
            <person name="Marino C.L."/>
            <person name="Giglioti E."/>
            <person name="Abreu I.L."/>
            <person name="Alves L.M.C."/>
            <person name="do Amaral A.M."/>
            <person name="Baia G.S."/>
            <person name="Blanco S.R."/>
            <person name="Brito M.S."/>
            <person name="Cannavan F.S."/>
            <person name="Celestino A.V."/>
            <person name="da Cunha A.F."/>
            <person name="Fenille R.C."/>
            <person name="Ferro J.A."/>
            <person name="Formighieri E.F."/>
            <person name="Kishi L.T."/>
            <person name="Leoni S.G."/>
            <person name="Oliveira A.R."/>
            <person name="Rosa V.E. Jr."/>
            <person name="Sassaki F.T."/>
            <person name="Sena J.A.D."/>
            <person name="de Souza A.A."/>
            <person name="Truffi D."/>
            <person name="Tsukumo F."/>
            <person name="Yanai G.M."/>
            <person name="Zaros L.G."/>
            <person name="Civerolo E.L."/>
            <person name="Simpson A.J.G."/>
            <person name="Almeida N.F. Jr."/>
            <person name="Setubal J.C."/>
            <person name="Kitajima J.P."/>
        </authorList>
    </citation>
    <scope>NUCLEOTIDE SEQUENCE [LARGE SCALE GENOMIC DNA]</scope>
    <source>
        <strain>Temecula1 / ATCC 700964</strain>
    </source>
</reference>
<gene>
    <name evidence="1" type="primary">nfuA</name>
    <name type="ordered locus">PD_1979</name>
</gene>
<accession>Q87A52</accession>
<protein>
    <recommendedName>
        <fullName evidence="1">Fe/S biogenesis protein NfuA</fullName>
    </recommendedName>
</protein>
<proteinExistence type="inferred from homology"/>
<comment type="function">
    <text evidence="1">Involved in iron-sulfur cluster biogenesis. Binds a 4Fe-4S cluster, can transfer this cluster to apoproteins, and thereby intervenes in the maturation of Fe/S proteins. Could also act as a scaffold/chaperone for damaged Fe/S proteins.</text>
</comment>
<comment type="cofactor">
    <cofactor evidence="1">
        <name>[4Fe-4S] cluster</name>
        <dbReference type="ChEBI" id="CHEBI:49883"/>
    </cofactor>
    <text evidence="1">Binds 1 [4Fe-4S] cluster per subunit. The cluster is presumably bound at the interface of two monomers.</text>
</comment>
<comment type="subunit">
    <text evidence="1">Homodimer.</text>
</comment>
<comment type="similarity">
    <text evidence="1">Belongs to the NfuA family.</text>
</comment>
<dbReference type="EMBL" id="AE009442">
    <property type="protein sequence ID" value="AAO29808.1"/>
    <property type="molecule type" value="Genomic_DNA"/>
</dbReference>
<dbReference type="RefSeq" id="WP_004087536.1">
    <property type="nucleotide sequence ID" value="NC_004556.1"/>
</dbReference>
<dbReference type="SMR" id="Q87A52"/>
<dbReference type="KEGG" id="xft:PD_1979"/>
<dbReference type="HOGENOM" id="CLU_094569_0_0_6"/>
<dbReference type="Proteomes" id="UP000002516">
    <property type="component" value="Chromosome"/>
</dbReference>
<dbReference type="GO" id="GO:0051539">
    <property type="term" value="F:4 iron, 4 sulfur cluster binding"/>
    <property type="evidence" value="ECO:0007669"/>
    <property type="project" value="UniProtKB-UniRule"/>
</dbReference>
<dbReference type="GO" id="GO:0005506">
    <property type="term" value="F:iron ion binding"/>
    <property type="evidence" value="ECO:0007669"/>
    <property type="project" value="InterPro"/>
</dbReference>
<dbReference type="GO" id="GO:0016226">
    <property type="term" value="P:iron-sulfur cluster assembly"/>
    <property type="evidence" value="ECO:0007669"/>
    <property type="project" value="UniProtKB-UniRule"/>
</dbReference>
<dbReference type="GO" id="GO:0051604">
    <property type="term" value="P:protein maturation"/>
    <property type="evidence" value="ECO:0007669"/>
    <property type="project" value="UniProtKB-UniRule"/>
</dbReference>
<dbReference type="Gene3D" id="3.30.300.130">
    <property type="entry name" value="Fe-S cluster assembly (FSCA)"/>
    <property type="match status" value="1"/>
</dbReference>
<dbReference type="Gene3D" id="2.60.300.12">
    <property type="entry name" value="HesB-like domain"/>
    <property type="match status" value="1"/>
</dbReference>
<dbReference type="HAMAP" id="MF_01637">
    <property type="entry name" value="Fe_S_biogen_NfuA"/>
    <property type="match status" value="1"/>
</dbReference>
<dbReference type="InterPro" id="IPR017726">
    <property type="entry name" value="Fe/S_biogenesis_protein_NfuA"/>
</dbReference>
<dbReference type="InterPro" id="IPR034904">
    <property type="entry name" value="FSCA_dom_sf"/>
</dbReference>
<dbReference type="InterPro" id="IPR035903">
    <property type="entry name" value="HesB-like_dom_sf"/>
</dbReference>
<dbReference type="InterPro" id="IPR001075">
    <property type="entry name" value="NIF_FeS_clus_asmbl_NifU_C"/>
</dbReference>
<dbReference type="PANTHER" id="PTHR11178:SF51">
    <property type="entry name" value="FE_S BIOGENESIS PROTEIN NFUA"/>
    <property type="match status" value="1"/>
</dbReference>
<dbReference type="PANTHER" id="PTHR11178">
    <property type="entry name" value="IRON-SULFUR CLUSTER SCAFFOLD PROTEIN NFU-RELATED"/>
    <property type="match status" value="1"/>
</dbReference>
<dbReference type="Pfam" id="PF01106">
    <property type="entry name" value="NifU"/>
    <property type="match status" value="1"/>
</dbReference>
<dbReference type="SUPFAM" id="SSF117916">
    <property type="entry name" value="Fe-S cluster assembly (FSCA) domain-like"/>
    <property type="match status" value="1"/>
</dbReference>
<dbReference type="SUPFAM" id="SSF89360">
    <property type="entry name" value="HesB-like domain"/>
    <property type="match status" value="1"/>
</dbReference>
<sequence>MIQISDTAKSHFLKLIQREGVPGMGVRLSAVDPGTPRADARLEFADPSELVGDEWLIDCGDFTLYVASASVAWLDGAEIDYVTQATGSQQLIIKAPKIKGQELSQVASLVERVCWVVENEINPQLASHGGRVEVQEVSAEGVVLLRFGGGCHGCGMADVTLKQGVEKTLMDRVHGVIAVRDATDHSTGAAPYISRDFSP</sequence>
<evidence type="ECO:0000255" key="1">
    <source>
        <dbReference type="HAMAP-Rule" id="MF_01637"/>
    </source>
</evidence>
<name>NFUA_XYLFT</name>
<keyword id="KW-0004">4Fe-4S</keyword>
<keyword id="KW-0408">Iron</keyword>
<keyword id="KW-0411">Iron-sulfur</keyword>
<keyword id="KW-0479">Metal-binding</keyword>
<keyword id="KW-1185">Reference proteome</keyword>
<organism>
    <name type="scientific">Xylella fastidiosa (strain Temecula1 / ATCC 700964)</name>
    <dbReference type="NCBI Taxonomy" id="183190"/>
    <lineage>
        <taxon>Bacteria</taxon>
        <taxon>Pseudomonadati</taxon>
        <taxon>Pseudomonadota</taxon>
        <taxon>Gammaproteobacteria</taxon>
        <taxon>Lysobacterales</taxon>
        <taxon>Lysobacteraceae</taxon>
        <taxon>Xylella</taxon>
    </lineage>
</organism>